<reference key="1">
    <citation type="submission" date="2003-01" db="EMBL/GenBank/DDBJ databases">
        <title>Chloroplast DNA phylogeny of tribe Heliantheae (Asteraceae).</title>
        <authorList>
            <person name="Panero J.L."/>
            <person name="Baldwin B.G."/>
            <person name="Schilling E.E."/>
            <person name="Clevinger J.A."/>
        </authorList>
    </citation>
    <scope>NUCLEOTIDE SEQUENCE [GENOMIC DNA]</scope>
</reference>
<gene>
    <name evidence="1" type="primary">ndhI</name>
</gene>
<geneLocation type="chloroplast"/>
<evidence type="ECO:0000255" key="1">
    <source>
        <dbReference type="HAMAP-Rule" id="MF_01351"/>
    </source>
</evidence>
<name>NDHI_VENCA</name>
<accession>Q8HVJ7</accession>
<organism>
    <name type="scientific">Venegasia carpesioides</name>
    <name type="common">Canyon sunflower</name>
    <dbReference type="NCBI Taxonomy" id="41659"/>
    <lineage>
        <taxon>Eukaryota</taxon>
        <taxon>Viridiplantae</taxon>
        <taxon>Streptophyta</taxon>
        <taxon>Embryophyta</taxon>
        <taxon>Tracheophyta</taxon>
        <taxon>Spermatophyta</taxon>
        <taxon>Magnoliopsida</taxon>
        <taxon>eudicotyledons</taxon>
        <taxon>Gunneridae</taxon>
        <taxon>Pentapetalae</taxon>
        <taxon>asterids</taxon>
        <taxon>campanulids</taxon>
        <taxon>Asterales</taxon>
        <taxon>Asteraceae</taxon>
        <taxon>Asteroideae</taxon>
        <taxon>Heliantheae alliance</taxon>
        <taxon>Madieae</taxon>
        <taxon>Venegasiinae</taxon>
        <taxon>Venegasia</taxon>
    </lineage>
</organism>
<protein>
    <recommendedName>
        <fullName evidence="1">NAD(P)H-quinone oxidoreductase subunit I, chloroplastic</fullName>
        <ecNumber evidence="1">7.1.1.-</ecNumber>
    </recommendedName>
    <alternativeName>
        <fullName evidence="1">NAD(P)H dehydrogenase subunit I</fullName>
        <shortName evidence="1">NDH subunit I</shortName>
    </alternativeName>
    <alternativeName>
        <fullName evidence="1">NADH-plastoquinone oxidoreductase subunit I</fullName>
    </alternativeName>
</protein>
<keyword id="KW-0004">4Fe-4S</keyword>
<keyword id="KW-0150">Chloroplast</keyword>
<keyword id="KW-0408">Iron</keyword>
<keyword id="KW-0411">Iron-sulfur</keyword>
<keyword id="KW-0472">Membrane</keyword>
<keyword id="KW-0479">Metal-binding</keyword>
<keyword id="KW-0520">NAD</keyword>
<keyword id="KW-0521">NADP</keyword>
<keyword id="KW-0934">Plastid</keyword>
<keyword id="KW-0618">Plastoquinone</keyword>
<keyword id="KW-0874">Quinone</keyword>
<keyword id="KW-0677">Repeat</keyword>
<keyword id="KW-0793">Thylakoid</keyword>
<keyword id="KW-1278">Translocase</keyword>
<dbReference type="EC" id="7.1.1.-" evidence="1"/>
<dbReference type="EMBL" id="AF383866">
    <property type="protein sequence ID" value="AAN61807.1"/>
    <property type="molecule type" value="Genomic_DNA"/>
</dbReference>
<dbReference type="RefSeq" id="YP_010924390.1">
    <property type="nucleotide sequence ID" value="NC_081944.1"/>
</dbReference>
<dbReference type="SMR" id="Q8HVJ7"/>
<dbReference type="GeneID" id="84335811"/>
<dbReference type="GO" id="GO:0009535">
    <property type="term" value="C:chloroplast thylakoid membrane"/>
    <property type="evidence" value="ECO:0007669"/>
    <property type="project" value="UniProtKB-SubCell"/>
</dbReference>
<dbReference type="GO" id="GO:0051539">
    <property type="term" value="F:4 iron, 4 sulfur cluster binding"/>
    <property type="evidence" value="ECO:0007669"/>
    <property type="project" value="UniProtKB-KW"/>
</dbReference>
<dbReference type="GO" id="GO:0005506">
    <property type="term" value="F:iron ion binding"/>
    <property type="evidence" value="ECO:0007669"/>
    <property type="project" value="UniProtKB-UniRule"/>
</dbReference>
<dbReference type="GO" id="GO:0008137">
    <property type="term" value="F:NADH dehydrogenase (ubiquinone) activity"/>
    <property type="evidence" value="ECO:0007669"/>
    <property type="project" value="InterPro"/>
</dbReference>
<dbReference type="GO" id="GO:0048038">
    <property type="term" value="F:quinone binding"/>
    <property type="evidence" value="ECO:0007669"/>
    <property type="project" value="UniProtKB-KW"/>
</dbReference>
<dbReference type="GO" id="GO:0019684">
    <property type="term" value="P:photosynthesis, light reaction"/>
    <property type="evidence" value="ECO:0007669"/>
    <property type="project" value="UniProtKB-UniRule"/>
</dbReference>
<dbReference type="FunFam" id="3.30.70.3270:FF:000006">
    <property type="entry name" value="NAD(P)H-quinone oxidoreductase subunit I, chloroplastic"/>
    <property type="match status" value="1"/>
</dbReference>
<dbReference type="Gene3D" id="3.30.70.3270">
    <property type="match status" value="1"/>
</dbReference>
<dbReference type="HAMAP" id="MF_01351">
    <property type="entry name" value="NDH1_NuoI"/>
    <property type="match status" value="1"/>
</dbReference>
<dbReference type="InterPro" id="IPR017896">
    <property type="entry name" value="4Fe4S_Fe-S-bd"/>
</dbReference>
<dbReference type="InterPro" id="IPR017900">
    <property type="entry name" value="4Fe4S_Fe_S_CS"/>
</dbReference>
<dbReference type="InterPro" id="IPR010226">
    <property type="entry name" value="NADH_quinone_OxRdtase_chainI"/>
</dbReference>
<dbReference type="InterPro" id="IPR004497">
    <property type="entry name" value="NDHI"/>
</dbReference>
<dbReference type="NCBIfam" id="TIGR00403">
    <property type="entry name" value="ndhI"/>
    <property type="match status" value="1"/>
</dbReference>
<dbReference type="NCBIfam" id="TIGR01971">
    <property type="entry name" value="NuoI"/>
    <property type="match status" value="1"/>
</dbReference>
<dbReference type="NCBIfam" id="NF004537">
    <property type="entry name" value="PRK05888.1-3"/>
    <property type="match status" value="1"/>
</dbReference>
<dbReference type="PANTHER" id="PTHR47275">
    <property type="entry name" value="NAD(P)H-QUINONE OXIDOREDUCTASE SUBUNIT I, CHLOROPLASTIC"/>
    <property type="match status" value="1"/>
</dbReference>
<dbReference type="PANTHER" id="PTHR47275:SF1">
    <property type="entry name" value="NAD(P)H-QUINONE OXIDOREDUCTASE SUBUNIT I, CHLOROPLASTIC"/>
    <property type="match status" value="1"/>
</dbReference>
<dbReference type="Pfam" id="PF00037">
    <property type="entry name" value="Fer4"/>
    <property type="match status" value="2"/>
</dbReference>
<dbReference type="SUPFAM" id="SSF54862">
    <property type="entry name" value="4Fe-4S ferredoxins"/>
    <property type="match status" value="1"/>
</dbReference>
<dbReference type="PROSITE" id="PS00198">
    <property type="entry name" value="4FE4S_FER_1"/>
    <property type="match status" value="2"/>
</dbReference>
<dbReference type="PROSITE" id="PS51379">
    <property type="entry name" value="4FE4S_FER_2"/>
    <property type="match status" value="2"/>
</dbReference>
<proteinExistence type="inferred from homology"/>
<comment type="function">
    <text evidence="1">NDH shuttles electrons from NAD(P)H:plastoquinone, via FMN and iron-sulfur (Fe-S) centers, to quinones in the photosynthetic chain and possibly in a chloroplast respiratory chain. The immediate electron acceptor for the enzyme in this species is believed to be plastoquinone. Couples the redox reaction to proton translocation, and thus conserves the redox energy in a proton gradient.</text>
</comment>
<comment type="catalytic activity">
    <reaction evidence="1">
        <text>a plastoquinone + NADH + (n+1) H(+)(in) = a plastoquinol + NAD(+) + n H(+)(out)</text>
        <dbReference type="Rhea" id="RHEA:42608"/>
        <dbReference type="Rhea" id="RHEA-COMP:9561"/>
        <dbReference type="Rhea" id="RHEA-COMP:9562"/>
        <dbReference type="ChEBI" id="CHEBI:15378"/>
        <dbReference type="ChEBI" id="CHEBI:17757"/>
        <dbReference type="ChEBI" id="CHEBI:57540"/>
        <dbReference type="ChEBI" id="CHEBI:57945"/>
        <dbReference type="ChEBI" id="CHEBI:62192"/>
    </reaction>
</comment>
<comment type="catalytic activity">
    <reaction evidence="1">
        <text>a plastoquinone + NADPH + (n+1) H(+)(in) = a plastoquinol + NADP(+) + n H(+)(out)</text>
        <dbReference type="Rhea" id="RHEA:42612"/>
        <dbReference type="Rhea" id="RHEA-COMP:9561"/>
        <dbReference type="Rhea" id="RHEA-COMP:9562"/>
        <dbReference type="ChEBI" id="CHEBI:15378"/>
        <dbReference type="ChEBI" id="CHEBI:17757"/>
        <dbReference type="ChEBI" id="CHEBI:57783"/>
        <dbReference type="ChEBI" id="CHEBI:58349"/>
        <dbReference type="ChEBI" id="CHEBI:62192"/>
    </reaction>
</comment>
<comment type="cofactor">
    <cofactor evidence="1">
        <name>[4Fe-4S] cluster</name>
        <dbReference type="ChEBI" id="CHEBI:49883"/>
    </cofactor>
    <text evidence="1">Binds 2 [4Fe-4S] clusters per subunit.</text>
</comment>
<comment type="subunit">
    <text evidence="1">NDH is composed of at least 16 different subunits, 5 of which are encoded in the nucleus.</text>
</comment>
<comment type="subcellular location">
    <subcellularLocation>
        <location evidence="1">Plastid</location>
        <location evidence="1">Chloroplast thylakoid membrane</location>
        <topology evidence="1">Peripheral membrane protein</topology>
    </subcellularLocation>
</comment>
<comment type="similarity">
    <text evidence="1">Belongs to the complex I 23 kDa subunit family.</text>
</comment>
<feature type="chain" id="PRO_0000250863" description="NAD(P)H-quinone oxidoreductase subunit I, chloroplastic">
    <location>
        <begin position="1"/>
        <end position="166"/>
    </location>
</feature>
<feature type="domain" description="4Fe-4S ferredoxin-type 1" evidence="1">
    <location>
        <begin position="55"/>
        <end position="84"/>
    </location>
</feature>
<feature type="domain" description="4Fe-4S ferredoxin-type 2" evidence="1">
    <location>
        <begin position="95"/>
        <end position="124"/>
    </location>
</feature>
<feature type="binding site" evidence="1">
    <location>
        <position position="64"/>
    </location>
    <ligand>
        <name>[4Fe-4S] cluster</name>
        <dbReference type="ChEBI" id="CHEBI:49883"/>
        <label>1</label>
    </ligand>
</feature>
<feature type="binding site" evidence="1">
    <location>
        <position position="67"/>
    </location>
    <ligand>
        <name>[4Fe-4S] cluster</name>
        <dbReference type="ChEBI" id="CHEBI:49883"/>
        <label>1</label>
    </ligand>
</feature>
<feature type="binding site" evidence="1">
    <location>
        <position position="70"/>
    </location>
    <ligand>
        <name>[4Fe-4S] cluster</name>
        <dbReference type="ChEBI" id="CHEBI:49883"/>
        <label>1</label>
    </ligand>
</feature>
<feature type="binding site" evidence="1">
    <location>
        <position position="74"/>
    </location>
    <ligand>
        <name>[4Fe-4S] cluster</name>
        <dbReference type="ChEBI" id="CHEBI:49883"/>
        <label>2</label>
    </ligand>
</feature>
<feature type="binding site" evidence="1">
    <location>
        <position position="104"/>
    </location>
    <ligand>
        <name>[4Fe-4S] cluster</name>
        <dbReference type="ChEBI" id="CHEBI:49883"/>
        <label>2</label>
    </ligand>
</feature>
<feature type="binding site" evidence="1">
    <location>
        <position position="107"/>
    </location>
    <ligand>
        <name>[4Fe-4S] cluster</name>
        <dbReference type="ChEBI" id="CHEBI:49883"/>
        <label>2</label>
    </ligand>
</feature>
<feature type="binding site" evidence="1">
    <location>
        <position position="110"/>
    </location>
    <ligand>
        <name>[4Fe-4S] cluster</name>
        <dbReference type="ChEBI" id="CHEBI:49883"/>
        <label>2</label>
    </ligand>
</feature>
<feature type="binding site" evidence="1">
    <location>
        <position position="114"/>
    </location>
    <ligand>
        <name>[4Fe-4S] cluster</name>
        <dbReference type="ChEBI" id="CHEBI:49883"/>
        <label>1</label>
    </ligand>
</feature>
<sequence length="166" mass="19509">MFPMVTEFMNYGQQTVRAARYIGQGFMITLSHANRLPVTIQYPYEKLITSERFRGRIHFEFDKCIACEVCVRVCPIDLPVVDWKLETDIRKKRLLNYSIDFGICIFCGNCVEYCPTNCLSMTEEYELSTYDRHELNYNQIALGRLPMSIIDDYTIRTIFNLPEIKT</sequence>